<comment type="subunit">
    <text evidence="4">Interacts with RANBPM.</text>
</comment>
<comment type="subcellular location">
    <subcellularLocation>
        <location evidence="4">Cytoplasm</location>
    </subcellularLocation>
    <text evidence="4">Associates predominantly in the form of large cytoplasmic complexes.</text>
</comment>
<comment type="sequence caution" evidence="5">
    <conflict type="frameshift">
        <sequence resource="EMBL-CDS" id="AAL07102"/>
    </conflict>
</comment>
<gene>
    <name evidence="7" type="primary">WDS</name>
    <name evidence="6" type="ordered locus">At5g43920</name>
    <name evidence="8" type="ORF">MRH10.1</name>
</gene>
<evidence type="ECO:0000255" key="1"/>
<evidence type="ECO:0000255" key="2">
    <source>
        <dbReference type="PROSITE-ProRule" id="PRU00058"/>
    </source>
</evidence>
<evidence type="ECO:0000255" key="3">
    <source>
        <dbReference type="PROSITE-ProRule" id="PRU00126"/>
    </source>
</evidence>
<evidence type="ECO:0000269" key="4">
    <source>
    </source>
</evidence>
<evidence type="ECO:0000305" key="5"/>
<evidence type="ECO:0000312" key="6">
    <source>
        <dbReference type="Araport" id="AT5G43920"/>
    </source>
</evidence>
<evidence type="ECO:0000312" key="7">
    <source>
        <dbReference type="EMBL" id="ABQ85545.1"/>
    </source>
</evidence>
<evidence type="ECO:0000312" key="8">
    <source>
        <dbReference type="EMBL" id="BAB09052.1"/>
    </source>
</evidence>
<reference key="1">
    <citation type="submission" date="2007-05" db="EMBL/GenBank/DDBJ databases">
        <title>Will die slowly gene in Arabidopsis senescence and disease resistance.</title>
        <authorList>
            <person name="Xiong X."/>
            <person name="Sun S."/>
            <person name="Halim T.A."/>
            <person name="Halim V.A."/>
            <person name="Kobaisy M."/>
            <person name="Xing T."/>
        </authorList>
    </citation>
    <scope>NUCLEOTIDE SEQUENCE [GENOMIC DNA]</scope>
</reference>
<reference key="2">
    <citation type="journal article" date="1997" name="DNA Res.">
        <title>Structural analysis of Arabidopsis thaliana chromosome 5. II. Sequence features of the regions of 1,044,062 bp covered by thirteen physically assigned P1 clones.</title>
        <authorList>
            <person name="Kotani H."/>
            <person name="Nakamura Y."/>
            <person name="Sato S."/>
            <person name="Kaneko T."/>
            <person name="Asamizu E."/>
            <person name="Miyajima N."/>
            <person name="Tabata S."/>
        </authorList>
    </citation>
    <scope>NUCLEOTIDE SEQUENCE [LARGE SCALE GENOMIC DNA]</scope>
    <source>
        <strain>cv. Columbia</strain>
    </source>
</reference>
<reference key="3">
    <citation type="journal article" date="2017" name="Plant J.">
        <title>Araport11: a complete reannotation of the Arabidopsis thaliana reference genome.</title>
        <authorList>
            <person name="Cheng C.Y."/>
            <person name="Krishnakumar V."/>
            <person name="Chan A.P."/>
            <person name="Thibaud-Nissen F."/>
            <person name="Schobel S."/>
            <person name="Town C.D."/>
        </authorList>
    </citation>
    <scope>GENOME REANNOTATION</scope>
    <source>
        <strain>cv. Columbia</strain>
    </source>
</reference>
<reference key="4">
    <citation type="journal article" date="2003" name="Science">
        <title>Empirical analysis of transcriptional activity in the Arabidopsis genome.</title>
        <authorList>
            <person name="Yamada K."/>
            <person name="Lim J."/>
            <person name="Dale J.M."/>
            <person name="Chen H."/>
            <person name="Shinn P."/>
            <person name="Palm C.J."/>
            <person name="Southwick A.M."/>
            <person name="Wu H.C."/>
            <person name="Kim C.J."/>
            <person name="Nguyen M."/>
            <person name="Pham P.K."/>
            <person name="Cheuk R.F."/>
            <person name="Karlin-Newmann G."/>
            <person name="Liu S.X."/>
            <person name="Lam B."/>
            <person name="Sakano H."/>
            <person name="Wu T."/>
            <person name="Yu G."/>
            <person name="Miranda M."/>
            <person name="Quach H.L."/>
            <person name="Tripp M."/>
            <person name="Chang C.H."/>
            <person name="Lee J.M."/>
            <person name="Toriumi M.J."/>
            <person name="Chan M.M."/>
            <person name="Tang C.C."/>
            <person name="Onodera C.S."/>
            <person name="Deng J.M."/>
            <person name="Akiyama K."/>
            <person name="Ansari Y."/>
            <person name="Arakawa T."/>
            <person name="Banh J."/>
            <person name="Banno F."/>
            <person name="Bowser L."/>
            <person name="Brooks S.Y."/>
            <person name="Carninci P."/>
            <person name="Chao Q."/>
            <person name="Choy N."/>
            <person name="Enju A."/>
            <person name="Goldsmith A.D."/>
            <person name="Gurjal M."/>
            <person name="Hansen N.F."/>
            <person name="Hayashizaki Y."/>
            <person name="Johnson-Hopson C."/>
            <person name="Hsuan V.W."/>
            <person name="Iida K."/>
            <person name="Karnes M."/>
            <person name="Khan S."/>
            <person name="Koesema E."/>
            <person name="Ishida J."/>
            <person name="Jiang P.X."/>
            <person name="Jones T."/>
            <person name="Kawai J."/>
            <person name="Kamiya A."/>
            <person name="Meyers C."/>
            <person name="Nakajima M."/>
            <person name="Narusaka M."/>
            <person name="Seki M."/>
            <person name="Sakurai T."/>
            <person name="Satou M."/>
            <person name="Tamse R."/>
            <person name="Vaysberg M."/>
            <person name="Wallender E.K."/>
            <person name="Wong C."/>
            <person name="Yamamura Y."/>
            <person name="Yuan S."/>
            <person name="Shinozaki K."/>
            <person name="Davis R.W."/>
            <person name="Theologis A."/>
            <person name="Ecker J.R."/>
        </authorList>
    </citation>
    <scope>NUCLEOTIDE SEQUENCE [LARGE SCALE MRNA]</scope>
    <source>
        <strain>cv. Columbia</strain>
    </source>
</reference>
<reference key="5">
    <citation type="submission" date="2006-07" db="EMBL/GenBank/DDBJ databases">
        <title>Large-scale analysis of RIKEN Arabidopsis full-length (RAFL) cDNAs.</title>
        <authorList>
            <person name="Totoki Y."/>
            <person name="Seki M."/>
            <person name="Ishida J."/>
            <person name="Nakajima M."/>
            <person name="Enju A."/>
            <person name="Kamiya A."/>
            <person name="Narusaka M."/>
            <person name="Shin-i T."/>
            <person name="Nakagawa M."/>
            <person name="Sakamoto N."/>
            <person name="Oishi K."/>
            <person name="Kohara Y."/>
            <person name="Kobayashi M."/>
            <person name="Toyoda A."/>
            <person name="Sakaki Y."/>
            <person name="Sakurai T."/>
            <person name="Iida K."/>
            <person name="Akiyama K."/>
            <person name="Satou M."/>
            <person name="Toyoda T."/>
            <person name="Konagaya A."/>
            <person name="Carninci P."/>
            <person name="Kawai J."/>
            <person name="Hayashizaki Y."/>
            <person name="Shinozaki K."/>
        </authorList>
    </citation>
    <scope>NUCLEOTIDE SEQUENCE [LARGE SCALE MRNA]</scope>
    <source>
        <strain>cv. Columbia</strain>
    </source>
</reference>
<reference key="6">
    <citation type="journal article" date="2012" name="BMC Plant Biol.">
        <title>Interactions of an Arabidopsis RanBPM homologue with LisH-CTLH domain proteins revealed high conservation of CTLH complexes in eukaryotes.</title>
        <authorList>
            <person name="Tomastikova E."/>
            <person name="Cenklova V."/>
            <person name="Kohoutova L."/>
            <person name="Petrovska B."/>
            <person name="Vachova L."/>
            <person name="Halada P."/>
            <person name="Kocarova G."/>
            <person name="Binarova P."/>
        </authorList>
    </citation>
    <scope>IDENTIFICATION BY MASS SPECTROMETRY</scope>
    <scope>INTERACTION WITH RANBPM</scope>
    <scope>SUBCELLULAR LOCATION</scope>
</reference>
<name>WDS_ARATH</name>
<proteinExistence type="evidence at protein level"/>
<dbReference type="EMBL" id="EF601122">
    <property type="protein sequence ID" value="ABQ85545.1"/>
    <property type="molecule type" value="Genomic_DNA"/>
</dbReference>
<dbReference type="EMBL" id="AB006703">
    <property type="protein sequence ID" value="BAB09052.1"/>
    <property type="molecule type" value="Genomic_DNA"/>
</dbReference>
<dbReference type="EMBL" id="CP002688">
    <property type="protein sequence ID" value="AED95028.1"/>
    <property type="molecule type" value="Genomic_DNA"/>
</dbReference>
<dbReference type="EMBL" id="AY056253">
    <property type="protein sequence ID" value="AAL07102.1"/>
    <property type="status" value="ALT_FRAME"/>
    <property type="molecule type" value="mRNA"/>
</dbReference>
<dbReference type="EMBL" id="AK227235">
    <property type="protein sequence ID" value="BAE99272.1"/>
    <property type="molecule type" value="mRNA"/>
</dbReference>
<dbReference type="RefSeq" id="NP_199205.1">
    <property type="nucleotide sequence ID" value="NM_123759.3"/>
</dbReference>
<dbReference type="SMR" id="Q9FND4"/>
<dbReference type="FunCoup" id="Q9FND4">
    <property type="interactions" value="3118"/>
</dbReference>
<dbReference type="STRING" id="3702.Q9FND4"/>
<dbReference type="PaxDb" id="3702-AT5G43920.1"/>
<dbReference type="ProMEX" id="Q9FND4"/>
<dbReference type="ProteomicsDB" id="242765"/>
<dbReference type="EnsemblPlants" id="AT5G43920.1">
    <property type="protein sequence ID" value="AT5G43920.1"/>
    <property type="gene ID" value="AT5G43920"/>
</dbReference>
<dbReference type="GeneID" id="834414"/>
<dbReference type="Gramene" id="AT5G43920.1">
    <property type="protein sequence ID" value="AT5G43920.1"/>
    <property type="gene ID" value="AT5G43920"/>
</dbReference>
<dbReference type="KEGG" id="ath:AT5G43920"/>
<dbReference type="Araport" id="AT5G43920"/>
<dbReference type="TAIR" id="AT5G43920"/>
<dbReference type="eggNOG" id="KOG0293">
    <property type="taxonomic scope" value="Eukaryota"/>
</dbReference>
<dbReference type="HOGENOM" id="CLU_000288_57_25_1"/>
<dbReference type="InParanoid" id="Q9FND4"/>
<dbReference type="OMA" id="YEDHCCS"/>
<dbReference type="PhylomeDB" id="Q9FND4"/>
<dbReference type="PRO" id="PR:Q9FND4"/>
<dbReference type="Proteomes" id="UP000006548">
    <property type="component" value="Chromosome 5"/>
</dbReference>
<dbReference type="ExpressionAtlas" id="Q9FND4">
    <property type="expression patterns" value="baseline and differential"/>
</dbReference>
<dbReference type="GO" id="GO:0005737">
    <property type="term" value="C:cytoplasm"/>
    <property type="evidence" value="ECO:0000314"/>
    <property type="project" value="UniProtKB"/>
</dbReference>
<dbReference type="CDD" id="cd00200">
    <property type="entry name" value="WD40"/>
    <property type="match status" value="1"/>
</dbReference>
<dbReference type="FunFam" id="2.130.10.10:FF:000087">
    <property type="entry name" value="WD repeat-containing protein 26 homolog"/>
    <property type="match status" value="1"/>
</dbReference>
<dbReference type="Gene3D" id="2.130.10.10">
    <property type="entry name" value="YVTN repeat-like/Quinoprotein amine dehydrogenase"/>
    <property type="match status" value="2"/>
</dbReference>
<dbReference type="InterPro" id="IPR006595">
    <property type="entry name" value="CTLH_C"/>
</dbReference>
<dbReference type="InterPro" id="IPR020472">
    <property type="entry name" value="G-protein_beta_WD-40_rep"/>
</dbReference>
<dbReference type="InterPro" id="IPR006594">
    <property type="entry name" value="LisH"/>
</dbReference>
<dbReference type="InterPro" id="IPR015943">
    <property type="entry name" value="WD40/YVTN_repeat-like_dom_sf"/>
</dbReference>
<dbReference type="InterPro" id="IPR019775">
    <property type="entry name" value="WD40_repeat_CS"/>
</dbReference>
<dbReference type="InterPro" id="IPR036322">
    <property type="entry name" value="WD40_repeat_dom_sf"/>
</dbReference>
<dbReference type="InterPro" id="IPR001680">
    <property type="entry name" value="WD40_rpt"/>
</dbReference>
<dbReference type="InterPro" id="IPR051350">
    <property type="entry name" value="WD_repeat-ST_regulator"/>
</dbReference>
<dbReference type="PANTHER" id="PTHR22838">
    <property type="entry name" value="WD REPEAT PROTEIN 26-RELATED"/>
    <property type="match status" value="1"/>
</dbReference>
<dbReference type="PANTHER" id="PTHR22838:SF23">
    <property type="entry name" value="WD REPEAT-CONTAINING PROTEIN WDS HOMOLOG"/>
    <property type="match status" value="1"/>
</dbReference>
<dbReference type="Pfam" id="PF23627">
    <property type="entry name" value="LisH_WDR26"/>
    <property type="match status" value="1"/>
</dbReference>
<dbReference type="Pfam" id="PF00400">
    <property type="entry name" value="WD40"/>
    <property type="match status" value="5"/>
</dbReference>
<dbReference type="PRINTS" id="PR00320">
    <property type="entry name" value="GPROTEINBRPT"/>
</dbReference>
<dbReference type="SMART" id="SM00668">
    <property type="entry name" value="CTLH"/>
    <property type="match status" value="1"/>
</dbReference>
<dbReference type="SMART" id="SM00320">
    <property type="entry name" value="WD40"/>
    <property type="match status" value="7"/>
</dbReference>
<dbReference type="SUPFAM" id="SSF50978">
    <property type="entry name" value="WD40 repeat-like"/>
    <property type="match status" value="1"/>
</dbReference>
<dbReference type="PROSITE" id="PS50897">
    <property type="entry name" value="CTLH"/>
    <property type="match status" value="1"/>
</dbReference>
<dbReference type="PROSITE" id="PS50896">
    <property type="entry name" value="LISH"/>
    <property type="match status" value="1"/>
</dbReference>
<dbReference type="PROSITE" id="PS00678">
    <property type="entry name" value="WD_REPEATS_1"/>
    <property type="match status" value="1"/>
</dbReference>
<dbReference type="PROSITE" id="PS50082">
    <property type="entry name" value="WD_REPEATS_2"/>
    <property type="match status" value="4"/>
</dbReference>
<dbReference type="PROSITE" id="PS50294">
    <property type="entry name" value="WD_REPEATS_REGION"/>
    <property type="match status" value="1"/>
</dbReference>
<keyword id="KW-0963">Cytoplasm</keyword>
<keyword id="KW-1185">Reference proteome</keyword>
<keyword id="KW-0677">Repeat</keyword>
<keyword id="KW-0853">WD repeat</keyword>
<feature type="chain" id="PRO_0000442059" description="WD repeat-containing protein WDS homolog">
    <location>
        <begin position="1"/>
        <end position="523"/>
    </location>
</feature>
<feature type="domain" description="LisH" evidence="3">
    <location>
        <begin position="16"/>
        <end position="48"/>
    </location>
</feature>
<feature type="domain" description="CTLH" evidence="2">
    <location>
        <begin position="49"/>
        <end position="107"/>
    </location>
</feature>
<feature type="repeat" description="WD 1" evidence="1">
    <location>
        <begin position="222"/>
        <end position="261"/>
    </location>
</feature>
<feature type="repeat" description="WD 2" evidence="1">
    <location>
        <begin position="267"/>
        <end position="306"/>
    </location>
</feature>
<feature type="repeat" description="WD 3" evidence="1">
    <location>
        <begin position="310"/>
        <end position="353"/>
    </location>
</feature>
<feature type="repeat" description="WD 4" evidence="1">
    <location>
        <begin position="355"/>
        <end position="394"/>
    </location>
</feature>
<feature type="repeat" description="WD 5" evidence="1">
    <location>
        <begin position="395"/>
        <end position="434"/>
    </location>
</feature>
<feature type="repeat" description="WD 6" evidence="1">
    <location>
        <begin position="438"/>
        <end position="480"/>
    </location>
</feature>
<feature type="repeat" description="WD 7" evidence="1">
    <location>
        <begin position="483"/>
        <end position="523"/>
    </location>
</feature>
<sequence>MENGLWEVLGSKGLLKKHEFIRILVQCLYSLGFKNSASCLEFESKILYKTADSEFLEKQVLSGNWDSCVQVLDRIFDNSMDDTRNTALYLVFKQCLLEYLKRGDVSLALNVLRKQAPLLRMGKEKIHRLACDIVYSKEMESGEVDNCLVLDLRRKLLVELEKLIPLPIVIPERRLEHLVETAVMDQIDTCMYHNSCDAVSLYKDHCCGRDQIPSETVQILVAHKNEVWFVQFSNSGKYLATASSDCTAIIWKVLDDNKVELKHTLESHQNPVSFVSWSPDDTKLLTCGNAEVLKLWDVDTGVLRHTFGNNNTGFTVSSCAWFPDSTRLVCGSSDPERGIVMWDTDGNEIKAWRGTRIPKVVDLAVTPDGESMITVFSDKEIRILNLETKVERVISEEQPITSLSISGDGKFFIVNLSCQEIHLWDLAGEWKQPLKFSGHRQSKYVIRSCFGGLDSSFIASGSEDSQVYIWNLKNTKPLEVLSGHSMTVNCVSWNPKNPRMLASASDDQTIRIWGPGKPNKPLN</sequence>
<organism>
    <name type="scientific">Arabidopsis thaliana</name>
    <name type="common">Mouse-ear cress</name>
    <dbReference type="NCBI Taxonomy" id="3702"/>
    <lineage>
        <taxon>Eukaryota</taxon>
        <taxon>Viridiplantae</taxon>
        <taxon>Streptophyta</taxon>
        <taxon>Embryophyta</taxon>
        <taxon>Tracheophyta</taxon>
        <taxon>Spermatophyta</taxon>
        <taxon>Magnoliopsida</taxon>
        <taxon>eudicotyledons</taxon>
        <taxon>Gunneridae</taxon>
        <taxon>Pentapetalae</taxon>
        <taxon>rosids</taxon>
        <taxon>malvids</taxon>
        <taxon>Brassicales</taxon>
        <taxon>Brassicaceae</taxon>
        <taxon>Camelineae</taxon>
        <taxon>Arabidopsis</taxon>
    </lineage>
</organism>
<protein>
    <recommendedName>
        <fullName evidence="5">WD repeat-containing protein WDS homolog</fullName>
    </recommendedName>
    <alternativeName>
        <fullName evidence="5">Protein will die slowly homolog</fullName>
    </alternativeName>
</protein>
<accession>Q9FND4</accession>
<accession>Q93ZU7</accession>